<organism>
    <name type="scientific">Escherichia coli O1:K1 / APEC</name>
    <dbReference type="NCBI Taxonomy" id="405955"/>
    <lineage>
        <taxon>Bacteria</taxon>
        <taxon>Pseudomonadati</taxon>
        <taxon>Pseudomonadota</taxon>
        <taxon>Gammaproteobacteria</taxon>
        <taxon>Enterobacterales</taxon>
        <taxon>Enterobacteriaceae</taxon>
        <taxon>Escherichia</taxon>
    </lineage>
</organism>
<feature type="chain" id="PRO_1000063885" description="Exoribonuclease 2">
    <location>
        <begin position="1"/>
        <end position="644"/>
    </location>
</feature>
<feature type="domain" description="RNB" evidence="1">
    <location>
        <begin position="189"/>
        <end position="516"/>
    </location>
</feature>
<feature type="domain" description="S1 motif" evidence="2">
    <location>
        <begin position="561"/>
        <end position="643"/>
    </location>
</feature>
<gene>
    <name evidence="2" type="primary">rnb</name>
    <name type="ordered locus">Ecok1_12500</name>
    <name type="ORF">APECO1_445</name>
</gene>
<name>RNB_ECOK1</name>
<keyword id="KW-0963">Cytoplasm</keyword>
<keyword id="KW-0269">Exonuclease</keyword>
<keyword id="KW-0378">Hydrolase</keyword>
<keyword id="KW-0540">Nuclease</keyword>
<keyword id="KW-1185">Reference proteome</keyword>
<keyword id="KW-0694">RNA-binding</keyword>
<accession>A1AAQ4</accession>
<evidence type="ECO:0000255" key="1"/>
<evidence type="ECO:0000255" key="2">
    <source>
        <dbReference type="HAMAP-Rule" id="MF_01036"/>
    </source>
</evidence>
<comment type="function">
    <text evidence="2">Involved in mRNA degradation. Hydrolyzes single-stranded polyribonucleotides processively in the 3' to 5' direction.</text>
</comment>
<comment type="catalytic activity">
    <reaction evidence="2">
        <text>Exonucleolytic cleavage in the 3'- to 5'-direction to yield nucleoside 5'-phosphates.</text>
        <dbReference type="EC" id="3.1.13.1"/>
    </reaction>
</comment>
<comment type="subcellular location">
    <subcellularLocation>
        <location evidence="2">Cytoplasm</location>
    </subcellularLocation>
</comment>
<comment type="similarity">
    <text evidence="2">Belongs to the RNR ribonuclease family. RNase II subfamily.</text>
</comment>
<proteinExistence type="inferred from homology"/>
<dbReference type="EC" id="3.1.13.1" evidence="2"/>
<dbReference type="EMBL" id="CP000468">
    <property type="protein sequence ID" value="ABJ00744.1"/>
    <property type="molecule type" value="Genomic_DNA"/>
</dbReference>
<dbReference type="RefSeq" id="WP_000485006.1">
    <property type="nucleotide sequence ID" value="NZ_CADILS010000001.1"/>
</dbReference>
<dbReference type="SMR" id="A1AAQ4"/>
<dbReference type="KEGG" id="ecv:APECO1_445"/>
<dbReference type="HOGENOM" id="CLU_002333_7_3_6"/>
<dbReference type="Proteomes" id="UP000008216">
    <property type="component" value="Chromosome"/>
</dbReference>
<dbReference type="GO" id="GO:0005829">
    <property type="term" value="C:cytosol"/>
    <property type="evidence" value="ECO:0007669"/>
    <property type="project" value="TreeGrafter"/>
</dbReference>
<dbReference type="GO" id="GO:0008859">
    <property type="term" value="F:exoribonuclease II activity"/>
    <property type="evidence" value="ECO:0007669"/>
    <property type="project" value="UniProtKB-UniRule"/>
</dbReference>
<dbReference type="GO" id="GO:0003723">
    <property type="term" value="F:RNA binding"/>
    <property type="evidence" value="ECO:0007669"/>
    <property type="project" value="UniProtKB-KW"/>
</dbReference>
<dbReference type="GO" id="GO:0006402">
    <property type="term" value="P:mRNA catabolic process"/>
    <property type="evidence" value="ECO:0007669"/>
    <property type="project" value="UniProtKB-UniRule"/>
</dbReference>
<dbReference type="FunFam" id="2.40.50.140:FF:000079">
    <property type="entry name" value="Exoribonuclease 2"/>
    <property type="match status" value="1"/>
</dbReference>
<dbReference type="FunFam" id="2.40.50.140:FF:000081">
    <property type="entry name" value="Exoribonuclease 2"/>
    <property type="match status" value="1"/>
</dbReference>
<dbReference type="FunFam" id="2.40.50.640:FF:000001">
    <property type="entry name" value="Exoribonuclease 2"/>
    <property type="match status" value="1"/>
</dbReference>
<dbReference type="Gene3D" id="2.40.50.640">
    <property type="match status" value="1"/>
</dbReference>
<dbReference type="Gene3D" id="2.40.50.140">
    <property type="entry name" value="Nucleic acid-binding proteins"/>
    <property type="match status" value="2"/>
</dbReference>
<dbReference type="HAMAP" id="MF_01036">
    <property type="entry name" value="RNase_II"/>
    <property type="match status" value="1"/>
</dbReference>
<dbReference type="InterPro" id="IPR011129">
    <property type="entry name" value="CSD"/>
</dbReference>
<dbReference type="InterPro" id="IPR012340">
    <property type="entry name" value="NA-bd_OB-fold"/>
</dbReference>
<dbReference type="InterPro" id="IPR013223">
    <property type="entry name" value="RNase_B_OB_dom"/>
</dbReference>
<dbReference type="InterPro" id="IPR011804">
    <property type="entry name" value="RNase_II"/>
</dbReference>
<dbReference type="InterPro" id="IPR001900">
    <property type="entry name" value="RNase_II/R"/>
</dbReference>
<dbReference type="InterPro" id="IPR022966">
    <property type="entry name" value="RNase_II/R_CS"/>
</dbReference>
<dbReference type="InterPro" id="IPR004476">
    <property type="entry name" value="RNase_II/RNase_R"/>
</dbReference>
<dbReference type="InterPro" id="IPR050180">
    <property type="entry name" value="RNR_Ribonuclease"/>
</dbReference>
<dbReference type="InterPro" id="IPR003029">
    <property type="entry name" value="S1_domain"/>
</dbReference>
<dbReference type="NCBIfam" id="TIGR00358">
    <property type="entry name" value="3_prime_RNase"/>
    <property type="match status" value="1"/>
</dbReference>
<dbReference type="NCBIfam" id="NF003455">
    <property type="entry name" value="PRK05054.1"/>
    <property type="match status" value="1"/>
</dbReference>
<dbReference type="NCBIfam" id="TIGR02062">
    <property type="entry name" value="RNase_B"/>
    <property type="match status" value="1"/>
</dbReference>
<dbReference type="PANTHER" id="PTHR23355:SF37">
    <property type="entry name" value="EXORIBONUCLEASE 2"/>
    <property type="match status" value="1"/>
</dbReference>
<dbReference type="PANTHER" id="PTHR23355">
    <property type="entry name" value="RIBONUCLEASE"/>
    <property type="match status" value="1"/>
</dbReference>
<dbReference type="Pfam" id="PF08206">
    <property type="entry name" value="OB_RNB"/>
    <property type="match status" value="1"/>
</dbReference>
<dbReference type="Pfam" id="PF00773">
    <property type="entry name" value="RNB"/>
    <property type="match status" value="1"/>
</dbReference>
<dbReference type="Pfam" id="PF00575">
    <property type="entry name" value="S1"/>
    <property type="match status" value="1"/>
</dbReference>
<dbReference type="SMART" id="SM00357">
    <property type="entry name" value="CSP"/>
    <property type="match status" value="1"/>
</dbReference>
<dbReference type="SMART" id="SM00955">
    <property type="entry name" value="RNB"/>
    <property type="match status" value="1"/>
</dbReference>
<dbReference type="SUPFAM" id="SSF50249">
    <property type="entry name" value="Nucleic acid-binding proteins"/>
    <property type="match status" value="4"/>
</dbReference>
<dbReference type="PROSITE" id="PS01175">
    <property type="entry name" value="RIBONUCLEASE_II"/>
    <property type="match status" value="1"/>
</dbReference>
<sequence>MFQDNPLLAQLKQQLHSQTPRAEGVVKATEKGFGFLEVDAQKSYFIPPPQMKKVMHGDRIIAVIHSEKERESAEPEELVEPFLTRFVGKVQGKNDRLAIVPDHPLLKDAIPCRAARGLNHEFKEGDWAVAEMRRHPLKGDRSFYAELTQYITFGDDHFVPWWVTLARHNLEKEAPDGVATEMLDEGLVREDLTALDFVTIDSASTEDMDDALFAKALPDGKLQLIVAIADPTAWIAEGSKLDKAAKIRAFTNYLPGFNIPMLPRELSDDLCSLRANEVRPVLACRMTFSTDGTIEDNIEFFAATIESKAKLVYDQVSDWLENTGDWQPESEAIAEQVRLLAQICQRRGEWRHNHALVFKDRPDYRFILGEKGEVLDIVAEPRRIANRIVEEAMIAANICAARVLRDKLGFGIYNVHMGFDPANADALAALLKTHGLHVDAEEVLTLDGFCKLRRELDAQPTGFLDSRIRRFQSFAEISTEPGPHFGLGLEAYATWTSPIRKYGDMINHRLLKAVIKGETATRPQDEITVQMAERRRLNRMAERDVGDWLYARFLKDKAGTDTRFAAEIVDISRGGMRVRLVDNGAIAFIPAPFLHAVRDELVCSQENGTVQIKGETAYKVTDVIDVTIAEVRMETRSIIARPVA</sequence>
<protein>
    <recommendedName>
        <fullName evidence="2">Exoribonuclease 2</fullName>
        <ecNumber evidence="2">3.1.13.1</ecNumber>
    </recommendedName>
    <alternativeName>
        <fullName evidence="2">Exoribonuclease II</fullName>
        <shortName evidence="2">RNase II</shortName>
        <shortName evidence="2">Ribonuclease II</shortName>
    </alternativeName>
</protein>
<reference key="1">
    <citation type="journal article" date="2007" name="J. Bacteriol.">
        <title>The genome sequence of avian pathogenic Escherichia coli strain O1:K1:H7 shares strong similarities with human extraintestinal pathogenic E. coli genomes.</title>
        <authorList>
            <person name="Johnson T.J."/>
            <person name="Kariyawasam S."/>
            <person name="Wannemuehler Y."/>
            <person name="Mangiamele P."/>
            <person name="Johnson S.J."/>
            <person name="Doetkott C."/>
            <person name="Skyberg J.A."/>
            <person name="Lynne A.M."/>
            <person name="Johnson J.R."/>
            <person name="Nolan L.K."/>
        </authorList>
    </citation>
    <scope>NUCLEOTIDE SEQUENCE [LARGE SCALE GENOMIC DNA]</scope>
</reference>